<comment type="function">
    <text evidence="1">Insect active toxin causing rapid but reversible paralysis in crickets. No activity shown in mammals. Suppresses the excitatory postsynaptic potentials evoked in lobster neuromuscular synaptic preparations, possibly by blocking the presynaptic calcium channel. Induces instantaneous reversible paralysis when injected into crickets. Does not show effect on mammalian Cav2.1/CACNA1A, Cav2.2/CACNA1B and Cav2.3/CACNA1E (By similarity).</text>
</comment>
<comment type="subcellular location">
    <subcellularLocation>
        <location>Secreted</location>
    </subcellularLocation>
</comment>
<comment type="tissue specificity">
    <text>Expressed by the venom gland.</text>
</comment>
<comment type="domain">
    <text evidence="1">The presence of a 'disulfide through disulfide knot' structurally defines this protein as a knottin.</text>
</comment>
<comment type="miscellaneous">
    <text evidence="3">The primary structure of the mature peptide is identical to that of U2-agatoxin-Aop1a (Agelenin) from Allagelena opulenta (AC P31328).</text>
</comment>
<comment type="similarity">
    <text>Belongs to the neurotoxin 01 (U2-agtx) family.</text>
</comment>
<proteinExistence type="evidence at transcript level"/>
<protein>
    <recommendedName>
        <fullName>U2-agatoxin-Ao1a</fullName>
        <shortName>U2-AGTX-Ao1a</shortName>
    </recommendedName>
    <alternativeName>
        <fullName>Agelenin</fullName>
    </alternativeName>
</protein>
<feature type="signal peptide" evidence="2">
    <location>
        <begin position="1"/>
        <end position="20"/>
    </location>
</feature>
<feature type="propeptide" id="PRO_0000035531" evidence="1">
    <location>
        <begin position="21"/>
        <end position="34"/>
    </location>
</feature>
<feature type="chain" id="PRO_0000035532" description="U2-agatoxin-Ao1a">
    <location>
        <begin position="35"/>
        <end position="69"/>
    </location>
</feature>
<feature type="modified residue" description="Leucine amide" evidence="1">
    <location>
        <position position="69"/>
    </location>
</feature>
<feature type="disulfide bond" evidence="1">
    <location>
        <begin position="37"/>
        <end position="53"/>
    </location>
</feature>
<feature type="disulfide bond" evidence="1">
    <location>
        <begin position="44"/>
        <end position="58"/>
    </location>
</feature>
<feature type="disulfide bond" evidence="1">
    <location>
        <begin position="52"/>
        <end position="68"/>
    </location>
</feature>
<keyword id="KW-0027">Amidation</keyword>
<keyword id="KW-1015">Disulfide bond</keyword>
<keyword id="KW-0960">Knottin</keyword>
<keyword id="KW-0528">Neurotoxin</keyword>
<keyword id="KW-0964">Secreted</keyword>
<keyword id="KW-0732">Signal</keyword>
<keyword id="KW-0800">Toxin</keyword>
<sequence length="70" mass="7719">MRAIISLFLISAMVFSMIQAVPEEEGLQLSEDERGGCLPHNRFCNALSGPRCCSGLKCKELSIWDSRCLG</sequence>
<name>TXAGA_AGEOR</name>
<reference key="1">
    <citation type="journal article" date="2005" name="Proteins">
        <title>A novel strategy for the identification of toxinlike structures in spider venom.</title>
        <authorList>
            <person name="Kozlov S.A."/>
            <person name="Malyavka A."/>
            <person name="McCutchen B."/>
            <person name="Lu A."/>
            <person name="Schepers E."/>
            <person name="Herrmann R."/>
            <person name="Grishin E.V."/>
        </authorList>
    </citation>
    <scope>NUCLEOTIDE SEQUENCE [MRNA]</scope>
    <source>
        <tissue>Venom gland</tissue>
    </source>
</reference>
<accession>Q5Y4Y5</accession>
<dbReference type="EMBL" id="AY681297">
    <property type="protein sequence ID" value="AAU93655.1"/>
    <property type="molecule type" value="mRNA"/>
</dbReference>
<dbReference type="SMR" id="Q5Y4Y5"/>
<dbReference type="ArachnoServer" id="AS000287">
    <property type="toxin name" value="U2-agatoxin-Ao1a"/>
</dbReference>
<dbReference type="GO" id="GO:0005576">
    <property type="term" value="C:extracellular region"/>
    <property type="evidence" value="ECO:0007669"/>
    <property type="project" value="UniProtKB-SubCell"/>
</dbReference>
<dbReference type="GO" id="GO:0090729">
    <property type="term" value="F:toxin activity"/>
    <property type="evidence" value="ECO:0007669"/>
    <property type="project" value="UniProtKB-KW"/>
</dbReference>
<dbReference type="Pfam" id="PF05980">
    <property type="entry name" value="Toxin_7"/>
    <property type="match status" value="1"/>
</dbReference>
<dbReference type="SUPFAM" id="SSF57059">
    <property type="entry name" value="omega toxin-like"/>
    <property type="match status" value="1"/>
</dbReference>
<evidence type="ECO:0000250" key="1"/>
<evidence type="ECO:0000255" key="2"/>
<evidence type="ECO:0000305" key="3"/>
<organism>
    <name type="scientific">Agelena orientalis</name>
    <name type="common">Funnel-web spider</name>
    <dbReference type="NCBI Taxonomy" id="293813"/>
    <lineage>
        <taxon>Eukaryota</taxon>
        <taxon>Metazoa</taxon>
        <taxon>Ecdysozoa</taxon>
        <taxon>Arthropoda</taxon>
        <taxon>Chelicerata</taxon>
        <taxon>Arachnida</taxon>
        <taxon>Araneae</taxon>
        <taxon>Araneomorphae</taxon>
        <taxon>Entelegynae</taxon>
        <taxon>Agelenidae</taxon>
        <taxon>Agelena</taxon>
    </lineage>
</organism>